<dbReference type="EC" id="6.3.4.2" evidence="1"/>
<dbReference type="EMBL" id="CP000440">
    <property type="protein sequence ID" value="ABI87702.1"/>
    <property type="molecule type" value="Genomic_DNA"/>
</dbReference>
<dbReference type="RefSeq" id="WP_011657363.1">
    <property type="nucleotide sequence ID" value="NZ_CP009798.1"/>
</dbReference>
<dbReference type="SMR" id="Q0BDS1"/>
<dbReference type="KEGG" id="bam:Bamb_2146"/>
<dbReference type="PATRIC" id="fig|339670.21.peg.2789"/>
<dbReference type="eggNOG" id="COG0504">
    <property type="taxonomic scope" value="Bacteria"/>
</dbReference>
<dbReference type="UniPathway" id="UPA00159">
    <property type="reaction ID" value="UER00277"/>
</dbReference>
<dbReference type="Proteomes" id="UP000000662">
    <property type="component" value="Chromosome 1"/>
</dbReference>
<dbReference type="GO" id="GO:0005829">
    <property type="term" value="C:cytosol"/>
    <property type="evidence" value="ECO:0007669"/>
    <property type="project" value="TreeGrafter"/>
</dbReference>
<dbReference type="GO" id="GO:0005524">
    <property type="term" value="F:ATP binding"/>
    <property type="evidence" value="ECO:0007669"/>
    <property type="project" value="UniProtKB-KW"/>
</dbReference>
<dbReference type="GO" id="GO:0003883">
    <property type="term" value="F:CTP synthase activity"/>
    <property type="evidence" value="ECO:0007669"/>
    <property type="project" value="UniProtKB-UniRule"/>
</dbReference>
<dbReference type="GO" id="GO:0004359">
    <property type="term" value="F:glutaminase activity"/>
    <property type="evidence" value="ECO:0007669"/>
    <property type="project" value="RHEA"/>
</dbReference>
<dbReference type="GO" id="GO:0042802">
    <property type="term" value="F:identical protein binding"/>
    <property type="evidence" value="ECO:0007669"/>
    <property type="project" value="TreeGrafter"/>
</dbReference>
<dbReference type="GO" id="GO:0046872">
    <property type="term" value="F:metal ion binding"/>
    <property type="evidence" value="ECO:0007669"/>
    <property type="project" value="UniProtKB-KW"/>
</dbReference>
<dbReference type="GO" id="GO:0044210">
    <property type="term" value="P:'de novo' CTP biosynthetic process"/>
    <property type="evidence" value="ECO:0007669"/>
    <property type="project" value="UniProtKB-UniRule"/>
</dbReference>
<dbReference type="GO" id="GO:0019856">
    <property type="term" value="P:pyrimidine nucleobase biosynthetic process"/>
    <property type="evidence" value="ECO:0007669"/>
    <property type="project" value="TreeGrafter"/>
</dbReference>
<dbReference type="CDD" id="cd03113">
    <property type="entry name" value="CTPS_N"/>
    <property type="match status" value="1"/>
</dbReference>
<dbReference type="CDD" id="cd01746">
    <property type="entry name" value="GATase1_CTP_Synthase"/>
    <property type="match status" value="1"/>
</dbReference>
<dbReference type="FunFam" id="3.40.50.300:FF:000009">
    <property type="entry name" value="CTP synthase"/>
    <property type="match status" value="1"/>
</dbReference>
<dbReference type="FunFam" id="3.40.50.880:FF:000002">
    <property type="entry name" value="CTP synthase"/>
    <property type="match status" value="1"/>
</dbReference>
<dbReference type="Gene3D" id="3.40.50.880">
    <property type="match status" value="1"/>
</dbReference>
<dbReference type="Gene3D" id="3.40.50.300">
    <property type="entry name" value="P-loop containing nucleotide triphosphate hydrolases"/>
    <property type="match status" value="1"/>
</dbReference>
<dbReference type="HAMAP" id="MF_01227">
    <property type="entry name" value="PyrG"/>
    <property type="match status" value="1"/>
</dbReference>
<dbReference type="InterPro" id="IPR029062">
    <property type="entry name" value="Class_I_gatase-like"/>
</dbReference>
<dbReference type="InterPro" id="IPR004468">
    <property type="entry name" value="CTP_synthase"/>
</dbReference>
<dbReference type="InterPro" id="IPR017456">
    <property type="entry name" value="CTP_synthase_N"/>
</dbReference>
<dbReference type="InterPro" id="IPR017926">
    <property type="entry name" value="GATASE"/>
</dbReference>
<dbReference type="InterPro" id="IPR033828">
    <property type="entry name" value="GATase1_CTP_Synthase"/>
</dbReference>
<dbReference type="InterPro" id="IPR027417">
    <property type="entry name" value="P-loop_NTPase"/>
</dbReference>
<dbReference type="NCBIfam" id="NF003792">
    <property type="entry name" value="PRK05380.1"/>
    <property type="match status" value="1"/>
</dbReference>
<dbReference type="NCBIfam" id="TIGR00337">
    <property type="entry name" value="PyrG"/>
    <property type="match status" value="1"/>
</dbReference>
<dbReference type="PANTHER" id="PTHR11550">
    <property type="entry name" value="CTP SYNTHASE"/>
    <property type="match status" value="1"/>
</dbReference>
<dbReference type="PANTHER" id="PTHR11550:SF0">
    <property type="entry name" value="CTP SYNTHASE-RELATED"/>
    <property type="match status" value="1"/>
</dbReference>
<dbReference type="Pfam" id="PF06418">
    <property type="entry name" value="CTP_synth_N"/>
    <property type="match status" value="1"/>
</dbReference>
<dbReference type="Pfam" id="PF00117">
    <property type="entry name" value="GATase"/>
    <property type="match status" value="1"/>
</dbReference>
<dbReference type="SUPFAM" id="SSF52317">
    <property type="entry name" value="Class I glutamine amidotransferase-like"/>
    <property type="match status" value="1"/>
</dbReference>
<dbReference type="SUPFAM" id="SSF52540">
    <property type="entry name" value="P-loop containing nucleoside triphosphate hydrolases"/>
    <property type="match status" value="1"/>
</dbReference>
<dbReference type="PROSITE" id="PS51273">
    <property type="entry name" value="GATASE_TYPE_1"/>
    <property type="match status" value="1"/>
</dbReference>
<proteinExistence type="inferred from homology"/>
<name>PYRG_BURCM</name>
<feature type="chain" id="PRO_1000139400" description="CTP synthase">
    <location>
        <begin position="1"/>
        <end position="552"/>
    </location>
</feature>
<feature type="domain" description="Glutamine amidotransferase type-1" evidence="1">
    <location>
        <begin position="295"/>
        <end position="547"/>
    </location>
</feature>
<feature type="region of interest" description="Amidoligase domain" evidence="1">
    <location>
        <begin position="1"/>
        <end position="270"/>
    </location>
</feature>
<feature type="active site" description="Nucleophile; for glutamine hydrolysis" evidence="1">
    <location>
        <position position="383"/>
    </location>
</feature>
<feature type="active site" evidence="1">
    <location>
        <position position="520"/>
    </location>
</feature>
<feature type="active site" evidence="1">
    <location>
        <position position="522"/>
    </location>
</feature>
<feature type="binding site" evidence="1">
    <location>
        <position position="13"/>
    </location>
    <ligand>
        <name>CTP</name>
        <dbReference type="ChEBI" id="CHEBI:37563"/>
        <note>allosteric inhibitor</note>
    </ligand>
</feature>
<feature type="binding site" evidence="1">
    <location>
        <position position="13"/>
    </location>
    <ligand>
        <name>UTP</name>
        <dbReference type="ChEBI" id="CHEBI:46398"/>
    </ligand>
</feature>
<feature type="binding site" evidence="1">
    <location>
        <begin position="14"/>
        <end position="19"/>
    </location>
    <ligand>
        <name>ATP</name>
        <dbReference type="ChEBI" id="CHEBI:30616"/>
    </ligand>
</feature>
<feature type="binding site" evidence="1">
    <location>
        <position position="71"/>
    </location>
    <ligand>
        <name>ATP</name>
        <dbReference type="ChEBI" id="CHEBI:30616"/>
    </ligand>
</feature>
<feature type="binding site" evidence="1">
    <location>
        <position position="71"/>
    </location>
    <ligand>
        <name>Mg(2+)</name>
        <dbReference type="ChEBI" id="CHEBI:18420"/>
    </ligand>
</feature>
<feature type="binding site" evidence="1">
    <location>
        <position position="144"/>
    </location>
    <ligand>
        <name>Mg(2+)</name>
        <dbReference type="ChEBI" id="CHEBI:18420"/>
    </ligand>
</feature>
<feature type="binding site" evidence="1">
    <location>
        <begin position="151"/>
        <end position="153"/>
    </location>
    <ligand>
        <name>CTP</name>
        <dbReference type="ChEBI" id="CHEBI:37563"/>
        <note>allosteric inhibitor</note>
    </ligand>
</feature>
<feature type="binding site" evidence="1">
    <location>
        <begin position="191"/>
        <end position="196"/>
    </location>
    <ligand>
        <name>CTP</name>
        <dbReference type="ChEBI" id="CHEBI:37563"/>
        <note>allosteric inhibitor</note>
    </ligand>
</feature>
<feature type="binding site" evidence="1">
    <location>
        <begin position="191"/>
        <end position="196"/>
    </location>
    <ligand>
        <name>UTP</name>
        <dbReference type="ChEBI" id="CHEBI:46398"/>
    </ligand>
</feature>
<feature type="binding site" evidence="1">
    <location>
        <position position="227"/>
    </location>
    <ligand>
        <name>CTP</name>
        <dbReference type="ChEBI" id="CHEBI:37563"/>
        <note>allosteric inhibitor</note>
    </ligand>
</feature>
<feature type="binding site" evidence="1">
    <location>
        <position position="227"/>
    </location>
    <ligand>
        <name>UTP</name>
        <dbReference type="ChEBI" id="CHEBI:46398"/>
    </ligand>
</feature>
<feature type="binding site" evidence="1">
    <location>
        <position position="356"/>
    </location>
    <ligand>
        <name>L-glutamine</name>
        <dbReference type="ChEBI" id="CHEBI:58359"/>
    </ligand>
</feature>
<feature type="binding site" evidence="1">
    <location>
        <begin position="384"/>
        <end position="387"/>
    </location>
    <ligand>
        <name>L-glutamine</name>
        <dbReference type="ChEBI" id="CHEBI:58359"/>
    </ligand>
</feature>
<feature type="binding site" evidence="1">
    <location>
        <position position="407"/>
    </location>
    <ligand>
        <name>L-glutamine</name>
        <dbReference type="ChEBI" id="CHEBI:58359"/>
    </ligand>
</feature>
<feature type="binding site" evidence="1">
    <location>
        <position position="473"/>
    </location>
    <ligand>
        <name>L-glutamine</name>
        <dbReference type="ChEBI" id="CHEBI:58359"/>
    </ligand>
</feature>
<evidence type="ECO:0000255" key="1">
    <source>
        <dbReference type="HAMAP-Rule" id="MF_01227"/>
    </source>
</evidence>
<comment type="function">
    <text evidence="1">Catalyzes the ATP-dependent amination of UTP to CTP with either L-glutamine or ammonia as the source of nitrogen. Regulates intracellular CTP levels through interactions with the four ribonucleotide triphosphates.</text>
</comment>
<comment type="catalytic activity">
    <reaction evidence="1">
        <text>UTP + L-glutamine + ATP + H2O = CTP + L-glutamate + ADP + phosphate + 2 H(+)</text>
        <dbReference type="Rhea" id="RHEA:26426"/>
        <dbReference type="ChEBI" id="CHEBI:15377"/>
        <dbReference type="ChEBI" id="CHEBI:15378"/>
        <dbReference type="ChEBI" id="CHEBI:29985"/>
        <dbReference type="ChEBI" id="CHEBI:30616"/>
        <dbReference type="ChEBI" id="CHEBI:37563"/>
        <dbReference type="ChEBI" id="CHEBI:43474"/>
        <dbReference type="ChEBI" id="CHEBI:46398"/>
        <dbReference type="ChEBI" id="CHEBI:58359"/>
        <dbReference type="ChEBI" id="CHEBI:456216"/>
        <dbReference type="EC" id="6.3.4.2"/>
    </reaction>
</comment>
<comment type="catalytic activity">
    <reaction evidence="1">
        <text>L-glutamine + H2O = L-glutamate + NH4(+)</text>
        <dbReference type="Rhea" id="RHEA:15889"/>
        <dbReference type="ChEBI" id="CHEBI:15377"/>
        <dbReference type="ChEBI" id="CHEBI:28938"/>
        <dbReference type="ChEBI" id="CHEBI:29985"/>
        <dbReference type="ChEBI" id="CHEBI:58359"/>
    </reaction>
</comment>
<comment type="catalytic activity">
    <reaction evidence="1">
        <text>UTP + NH4(+) + ATP = CTP + ADP + phosphate + 2 H(+)</text>
        <dbReference type="Rhea" id="RHEA:16597"/>
        <dbReference type="ChEBI" id="CHEBI:15378"/>
        <dbReference type="ChEBI" id="CHEBI:28938"/>
        <dbReference type="ChEBI" id="CHEBI:30616"/>
        <dbReference type="ChEBI" id="CHEBI:37563"/>
        <dbReference type="ChEBI" id="CHEBI:43474"/>
        <dbReference type="ChEBI" id="CHEBI:46398"/>
        <dbReference type="ChEBI" id="CHEBI:456216"/>
    </reaction>
</comment>
<comment type="activity regulation">
    <text evidence="1">Allosterically activated by GTP, when glutamine is the substrate; GTP has no effect on the reaction when ammonia is the substrate. The allosteric effector GTP functions by stabilizing the protein conformation that binds the tetrahedral intermediate(s) formed during glutamine hydrolysis. Inhibited by the product CTP, via allosteric rather than competitive inhibition.</text>
</comment>
<comment type="pathway">
    <text evidence="1">Pyrimidine metabolism; CTP biosynthesis via de novo pathway; CTP from UDP: step 2/2.</text>
</comment>
<comment type="subunit">
    <text evidence="1">Homotetramer.</text>
</comment>
<comment type="miscellaneous">
    <text evidence="1">CTPSs have evolved a hybrid strategy for distinguishing between UTP and CTP. The overlapping regions of the product feedback inhibitory and substrate sites recognize a common feature in both compounds, the triphosphate moiety. To differentiate isosteric substrate and product pyrimidine rings, an additional pocket far from the expected kinase/ligase catalytic site, specifically recognizes the cytosine and ribose portions of the product inhibitor.</text>
</comment>
<comment type="similarity">
    <text evidence="1">Belongs to the CTP synthase family.</text>
</comment>
<keyword id="KW-0067">ATP-binding</keyword>
<keyword id="KW-0315">Glutamine amidotransferase</keyword>
<keyword id="KW-0436">Ligase</keyword>
<keyword id="KW-0460">Magnesium</keyword>
<keyword id="KW-0479">Metal-binding</keyword>
<keyword id="KW-0547">Nucleotide-binding</keyword>
<keyword id="KW-0665">Pyrimidine biosynthesis</keyword>
<sequence>MTKYVFVTGGVVSSLGKGIAAASLAAILESRGLKVTLLKLDPYINVDPGTMSPFQHGEVFVTEDGAETDLDLGHYERFISTKMRKANNFTTGQIYESVIRKERRGDYLGKTVQVIPHITNEIQAFIERGAASATCGEPDVAIVEIGGTVGDIESLPFLEAARQMSLRLGRNSACFVHLTLVPYVATAGELKTKPTQHSVQKLREIGILPHVLLCRADRRIPDDESKKISMFSNVPEDAVISVWDADSIYKIPQMLHDQGLDRIICEELKLSPKDADLSMWSELVEKLENPKHEVTIGMVGKYVDLTESYKSLIEALRHASLHTSTRVNIEYIDSEEIEANGVDSLKHLDAVLVPGGFGRRGTEGKIAAIRYARESKVPYLGICLGMQLAVIEFARDVVGLKQANSTEFDSETPERVVALITEWYDRDGKVETRTEESDLGGTMRLGSQRCPIKPGTMAEEIYGKDVNERHRHRYEVNNRFVPQLEAGGLIISARTPSEDLPEMMELPRSMHPWFVGVQFHPEFTSTPRDGHPLFKSFVEAAFANKQARGVKA</sequence>
<organism>
    <name type="scientific">Burkholderia ambifaria (strain ATCC BAA-244 / DSM 16087 / CCUG 44356 / LMG 19182 / AMMD)</name>
    <name type="common">Burkholderia cepacia (strain AMMD)</name>
    <dbReference type="NCBI Taxonomy" id="339670"/>
    <lineage>
        <taxon>Bacteria</taxon>
        <taxon>Pseudomonadati</taxon>
        <taxon>Pseudomonadota</taxon>
        <taxon>Betaproteobacteria</taxon>
        <taxon>Burkholderiales</taxon>
        <taxon>Burkholderiaceae</taxon>
        <taxon>Burkholderia</taxon>
        <taxon>Burkholderia cepacia complex</taxon>
    </lineage>
</organism>
<protein>
    <recommendedName>
        <fullName evidence="1">CTP synthase</fullName>
        <ecNumber evidence="1">6.3.4.2</ecNumber>
    </recommendedName>
    <alternativeName>
        <fullName evidence="1">Cytidine 5'-triphosphate synthase</fullName>
    </alternativeName>
    <alternativeName>
        <fullName evidence="1">Cytidine triphosphate synthetase</fullName>
        <shortName evidence="1">CTP synthetase</shortName>
        <shortName evidence="1">CTPS</shortName>
    </alternativeName>
    <alternativeName>
        <fullName evidence="1">UTP--ammonia ligase</fullName>
    </alternativeName>
</protein>
<accession>Q0BDS1</accession>
<gene>
    <name evidence="1" type="primary">pyrG</name>
    <name type="ordered locus">Bamb_2146</name>
</gene>
<reference key="1">
    <citation type="submission" date="2006-08" db="EMBL/GenBank/DDBJ databases">
        <title>Complete sequence of chromosome 1 of Burkholderia cepacia AMMD.</title>
        <authorList>
            <person name="Copeland A."/>
            <person name="Lucas S."/>
            <person name="Lapidus A."/>
            <person name="Barry K."/>
            <person name="Detter J.C."/>
            <person name="Glavina del Rio T."/>
            <person name="Hammon N."/>
            <person name="Israni S."/>
            <person name="Pitluck S."/>
            <person name="Bruce D."/>
            <person name="Chain P."/>
            <person name="Malfatti S."/>
            <person name="Shin M."/>
            <person name="Vergez L."/>
            <person name="Schmutz J."/>
            <person name="Larimer F."/>
            <person name="Land M."/>
            <person name="Hauser L."/>
            <person name="Kyrpides N."/>
            <person name="Kim E."/>
            <person name="Parke J."/>
            <person name="Coenye T."/>
            <person name="Konstantinidis K."/>
            <person name="Ramette A."/>
            <person name="Tiedje J."/>
            <person name="Richardson P."/>
        </authorList>
    </citation>
    <scope>NUCLEOTIDE SEQUENCE [LARGE SCALE GENOMIC DNA]</scope>
    <source>
        <strain>ATCC BAA-244 / DSM 16087 / CCUG 44356 / LMG 19182 / AMMD</strain>
    </source>
</reference>